<feature type="chain" id="PRO_0000233630" description="Dortoxin">
    <location>
        <begin position="1"/>
        <end position="58"/>
    </location>
</feature>
<feature type="domain" description="LCN-type CS-alpha/beta" evidence="2">
    <location>
        <begin position="3"/>
        <end position="58"/>
    </location>
</feature>
<feature type="disulfide bond" evidence="2">
    <location>
        <begin position="18"/>
        <end position="41"/>
    </location>
</feature>
<feature type="disulfide bond" evidence="2">
    <location>
        <begin position="27"/>
        <end position="46"/>
    </location>
</feature>
<feature type="disulfide bond" evidence="2">
    <location>
        <begin position="31"/>
        <end position="48"/>
    </location>
</feature>
<keyword id="KW-0903">Direct protein sequencing</keyword>
<keyword id="KW-1015">Disulfide bond</keyword>
<keyword id="KW-0872">Ion channel impairing toxin</keyword>
<keyword id="KW-0528">Neurotoxin</keyword>
<keyword id="KW-0964">Secreted</keyword>
<keyword id="KW-0800">Toxin</keyword>
<keyword id="KW-0738">Voltage-gated sodium channel impairing toxin</keyword>
<evidence type="ECO:0000250" key="1"/>
<evidence type="ECO:0000255" key="2">
    <source>
        <dbReference type="PROSITE-ProRule" id="PRU01210"/>
    </source>
</evidence>
<evidence type="ECO:0000269" key="3">
    <source>
    </source>
</evidence>
<evidence type="ECO:0000305" key="4"/>
<proteinExistence type="evidence at protein level"/>
<comment type="function">
    <text evidence="1">Binds to sodium channels (Nav) and affects the channel activation process (By similarity). In mice, causes hyperactivity that persists until death.</text>
</comment>
<comment type="subcellular location">
    <subcellularLocation>
        <location>Secreted</location>
    </subcellularLocation>
</comment>
<comment type="tissue specificity">
    <text>Expressed by the venom gland.</text>
</comment>
<comment type="domain">
    <text evidence="4">Has the structural arrangement of an alpha-helix connected to antiparallel beta-sheets by disulfide bonds (CS-alpha/beta).</text>
</comment>
<comment type="mass spectrometry" mass="6641.4" method="Electrospray" evidence="3"/>
<comment type="similarity">
    <text evidence="4">Belongs to the long (3 C-C) scorpion toxin superfamily. Sodium channel inhibitor family. Beta subfamily.</text>
</comment>
<name>DORT_PARTR</name>
<reference key="1">
    <citation type="journal article" date="2005" name="Toxicon">
        <title>Three structurally related, highly potent, peptides from the venom of Parabuthus transvaalicus possess divergent biological activity.</title>
        <authorList>
            <person name="Inceoglu A.B."/>
            <person name="Lango J."/>
            <person name="Pessah I.N."/>
            <person name="Hammock B.D."/>
        </authorList>
    </citation>
    <scope>PROTEIN SEQUENCE</scope>
    <scope>MASS SPECTROMETRY</scope>
    <source>
        <tissue>Venom</tissue>
    </source>
</reference>
<organism>
    <name type="scientific">Parabuthus transvaalicus</name>
    <name type="common">Transvaal thick-tailed scorpion</name>
    <dbReference type="NCBI Taxonomy" id="170972"/>
    <lineage>
        <taxon>Eukaryota</taxon>
        <taxon>Metazoa</taxon>
        <taxon>Ecdysozoa</taxon>
        <taxon>Arthropoda</taxon>
        <taxon>Chelicerata</taxon>
        <taxon>Arachnida</taxon>
        <taxon>Scorpiones</taxon>
        <taxon>Buthida</taxon>
        <taxon>Buthoidea</taxon>
        <taxon>Buthidae</taxon>
        <taxon>Parabuthus</taxon>
    </lineage>
</organism>
<sequence length="58" mass="6648">ADVPGNYPLDKDGNTYTCLKLGENKDCQKVCKLHGVQYGYCYAFECWCKEYLDDKDSV</sequence>
<dbReference type="SMR" id="P0C1B7"/>
<dbReference type="GO" id="GO:0005576">
    <property type="term" value="C:extracellular region"/>
    <property type="evidence" value="ECO:0007669"/>
    <property type="project" value="UniProtKB-SubCell"/>
</dbReference>
<dbReference type="GO" id="GO:0019871">
    <property type="term" value="F:sodium channel inhibitor activity"/>
    <property type="evidence" value="ECO:0007669"/>
    <property type="project" value="InterPro"/>
</dbReference>
<dbReference type="GO" id="GO:0090729">
    <property type="term" value="F:toxin activity"/>
    <property type="evidence" value="ECO:0007669"/>
    <property type="project" value="UniProtKB-KW"/>
</dbReference>
<dbReference type="CDD" id="cd23106">
    <property type="entry name" value="neurotoxins_LC_scorpion"/>
    <property type="match status" value="1"/>
</dbReference>
<dbReference type="Gene3D" id="3.30.30.10">
    <property type="entry name" value="Knottin, scorpion toxin-like"/>
    <property type="match status" value="1"/>
</dbReference>
<dbReference type="InterPro" id="IPR044062">
    <property type="entry name" value="LCN-type_CS_alpha_beta_dom"/>
</dbReference>
<dbReference type="InterPro" id="IPR036574">
    <property type="entry name" value="Scorpion_toxin-like_sf"/>
</dbReference>
<dbReference type="InterPro" id="IPR002061">
    <property type="entry name" value="Scorpion_toxinL/defensin"/>
</dbReference>
<dbReference type="Pfam" id="PF00537">
    <property type="entry name" value="Toxin_3"/>
    <property type="match status" value="1"/>
</dbReference>
<dbReference type="SUPFAM" id="SSF57095">
    <property type="entry name" value="Scorpion toxin-like"/>
    <property type="match status" value="1"/>
</dbReference>
<dbReference type="PROSITE" id="PS51863">
    <property type="entry name" value="LCN_CSAB"/>
    <property type="match status" value="1"/>
</dbReference>
<protein>
    <recommendedName>
        <fullName>Dortoxin</fullName>
    </recommendedName>
    <alternativeName>
        <fullName>Dorsotoxin</fullName>
    </alternativeName>
</protein>
<accession>P0C1B7</accession>